<sequence>MKKILALLVIAPLLVSCSGNKNQVENEVFVKDTNGFEILMGQFAHNIENIWGLKEVLIAGPKDYVKYTDQYQTRSHINFDAGTITIETIATTNPAAHLRQAIITTLLMGDDPGSIDLYSDVNDIQISKEPFLYGQVLDNNGEPIRWEWRAAHFADYLLQNKMQTRTSGLHVISFVTIQLVPNHLDKRAHKYLPLVRKSAARYGVEESLILAIMQTESSFNPYAVSRSDALGLMQVVQHTAGKDVFKLKGKSGQPSRSYLFDPENNIDAGTAYLSILQNTYLGGIQNATSRRYAVITSYNGGAGSVLRVFHSDKNKAVGIINTMSPGDVFQTLTTKHPSGESRRYLVKVNSAQKNYRRY</sequence>
<evidence type="ECO:0000255" key="1">
    <source>
        <dbReference type="HAMAP-Rule" id="MF_01616"/>
    </source>
</evidence>
<evidence type="ECO:0000305" key="2"/>
<organism>
    <name type="scientific">Yersinia pestis bv. Antiqua (strain Nepal516)</name>
    <dbReference type="NCBI Taxonomy" id="377628"/>
    <lineage>
        <taxon>Bacteria</taxon>
        <taxon>Pseudomonadati</taxon>
        <taxon>Pseudomonadota</taxon>
        <taxon>Gammaproteobacteria</taxon>
        <taxon>Enterobacterales</taxon>
        <taxon>Yersiniaceae</taxon>
        <taxon>Yersinia</taxon>
    </lineage>
</organism>
<proteinExistence type="inferred from homology"/>
<gene>
    <name evidence="1" type="primary">mltC</name>
    <name type="ordered locus">YPN_3152</name>
    <name type="ORF">YP516_3579</name>
</gene>
<keyword id="KW-0998">Cell outer membrane</keyword>
<keyword id="KW-0961">Cell wall biogenesis/degradation</keyword>
<keyword id="KW-0449">Lipoprotein</keyword>
<keyword id="KW-0456">Lyase</keyword>
<keyword id="KW-0472">Membrane</keyword>
<keyword id="KW-0564">Palmitate</keyword>
<keyword id="KW-0732">Signal</keyword>
<reference key="1">
    <citation type="journal article" date="2006" name="J. Bacteriol.">
        <title>Complete genome sequence of Yersinia pestis strains Antiqua and Nepal516: evidence of gene reduction in an emerging pathogen.</title>
        <authorList>
            <person name="Chain P.S.G."/>
            <person name="Hu P."/>
            <person name="Malfatti S.A."/>
            <person name="Radnedge L."/>
            <person name="Larimer F."/>
            <person name="Vergez L.M."/>
            <person name="Worsham P."/>
            <person name="Chu M.C."/>
            <person name="Andersen G.L."/>
        </authorList>
    </citation>
    <scope>NUCLEOTIDE SEQUENCE [LARGE SCALE GENOMIC DNA]</scope>
    <source>
        <strain>Nepal516</strain>
    </source>
</reference>
<reference key="2">
    <citation type="submission" date="2009-04" db="EMBL/GenBank/DDBJ databases">
        <title>Yersinia pestis Nepal516A whole genome shotgun sequencing project.</title>
        <authorList>
            <person name="Plunkett G. III"/>
            <person name="Anderson B.D."/>
            <person name="Baumler D.J."/>
            <person name="Burland V."/>
            <person name="Cabot E.L."/>
            <person name="Glasner J.D."/>
            <person name="Mau B."/>
            <person name="Neeno-Eckwall E."/>
            <person name="Perna N.T."/>
            <person name="Munk A.C."/>
            <person name="Tapia R."/>
            <person name="Green L.D."/>
            <person name="Rogers Y.C."/>
            <person name="Detter J.C."/>
            <person name="Bruce D.C."/>
            <person name="Brettin T.S."/>
        </authorList>
    </citation>
    <scope>NUCLEOTIDE SEQUENCE [LARGE SCALE GENOMIC DNA]</scope>
    <source>
        <strain>Nepal516</strain>
    </source>
</reference>
<accession>Q1CEV1</accession>
<accession>C4GXJ8</accession>
<dbReference type="EC" id="4.2.2.n1" evidence="1"/>
<dbReference type="EMBL" id="CP000305">
    <property type="protein sequence ID" value="ABG19479.1"/>
    <property type="status" value="ALT_INIT"/>
    <property type="molecule type" value="Genomic_DNA"/>
</dbReference>
<dbReference type="EMBL" id="ACNQ01000017">
    <property type="protein sequence ID" value="EEO75648.1"/>
    <property type="status" value="ALT_INIT"/>
    <property type="molecule type" value="Genomic_DNA"/>
</dbReference>
<dbReference type="RefSeq" id="WP_002209995.1">
    <property type="nucleotide sequence ID" value="NZ_ACNQ01000017.1"/>
</dbReference>
<dbReference type="SMR" id="Q1CEV1"/>
<dbReference type="CAZy" id="GH23">
    <property type="family name" value="Glycoside Hydrolase Family 23"/>
</dbReference>
<dbReference type="GeneID" id="57973687"/>
<dbReference type="KEGG" id="ypn:YPN_3152"/>
<dbReference type="HOGENOM" id="CLU_044583_0_0_6"/>
<dbReference type="Proteomes" id="UP000008936">
    <property type="component" value="Chromosome"/>
</dbReference>
<dbReference type="GO" id="GO:0009279">
    <property type="term" value="C:cell outer membrane"/>
    <property type="evidence" value="ECO:0007669"/>
    <property type="project" value="UniProtKB-SubCell"/>
</dbReference>
<dbReference type="GO" id="GO:0016798">
    <property type="term" value="F:hydrolase activity, acting on glycosyl bonds"/>
    <property type="evidence" value="ECO:0007669"/>
    <property type="project" value="InterPro"/>
</dbReference>
<dbReference type="GO" id="GO:0008933">
    <property type="term" value="F:peptidoglycan lytic transglycosylase activity"/>
    <property type="evidence" value="ECO:0007669"/>
    <property type="project" value="UniProtKB-UniRule"/>
</dbReference>
<dbReference type="GO" id="GO:0016998">
    <property type="term" value="P:cell wall macromolecule catabolic process"/>
    <property type="evidence" value="ECO:0007669"/>
    <property type="project" value="UniProtKB-UniRule"/>
</dbReference>
<dbReference type="GO" id="GO:0071555">
    <property type="term" value="P:cell wall organization"/>
    <property type="evidence" value="ECO:0007669"/>
    <property type="project" value="UniProtKB-KW"/>
</dbReference>
<dbReference type="GO" id="GO:0000270">
    <property type="term" value="P:peptidoglycan metabolic process"/>
    <property type="evidence" value="ECO:0007669"/>
    <property type="project" value="InterPro"/>
</dbReference>
<dbReference type="CDD" id="cd16893">
    <property type="entry name" value="LT_MltC_MltE"/>
    <property type="match status" value="1"/>
</dbReference>
<dbReference type="FunFam" id="1.10.530.10:FF:000002">
    <property type="entry name" value="Membrane-bound lytic murein transglycosylase C"/>
    <property type="match status" value="1"/>
</dbReference>
<dbReference type="Gene3D" id="1.10.530.10">
    <property type="match status" value="1"/>
</dbReference>
<dbReference type="HAMAP" id="MF_01616">
    <property type="entry name" value="MltC"/>
    <property type="match status" value="1"/>
</dbReference>
<dbReference type="InterPro" id="IPR023346">
    <property type="entry name" value="Lysozyme-like_dom_sf"/>
</dbReference>
<dbReference type="InterPro" id="IPR023664">
    <property type="entry name" value="Murein_transglycosylaseC"/>
</dbReference>
<dbReference type="InterPro" id="IPR024570">
    <property type="entry name" value="Murein_transglycosylaseC_N"/>
</dbReference>
<dbReference type="InterPro" id="IPR000189">
    <property type="entry name" value="Transglyc_AS"/>
</dbReference>
<dbReference type="InterPro" id="IPR008258">
    <property type="entry name" value="Transglycosylase_SLT_dom_1"/>
</dbReference>
<dbReference type="NCBIfam" id="NF008670">
    <property type="entry name" value="PRK11671.1"/>
    <property type="match status" value="1"/>
</dbReference>
<dbReference type="PANTHER" id="PTHR37423:SF2">
    <property type="entry name" value="MEMBRANE-BOUND LYTIC MUREIN TRANSGLYCOSYLASE C"/>
    <property type="match status" value="1"/>
</dbReference>
<dbReference type="PANTHER" id="PTHR37423">
    <property type="entry name" value="SOLUBLE LYTIC MUREIN TRANSGLYCOSYLASE-RELATED"/>
    <property type="match status" value="1"/>
</dbReference>
<dbReference type="Pfam" id="PF11873">
    <property type="entry name" value="Mltc_N"/>
    <property type="match status" value="1"/>
</dbReference>
<dbReference type="Pfam" id="PF01464">
    <property type="entry name" value="SLT"/>
    <property type="match status" value="1"/>
</dbReference>
<dbReference type="SUPFAM" id="SSF53955">
    <property type="entry name" value="Lysozyme-like"/>
    <property type="match status" value="1"/>
</dbReference>
<dbReference type="PROSITE" id="PS51257">
    <property type="entry name" value="PROKAR_LIPOPROTEIN"/>
    <property type="match status" value="1"/>
</dbReference>
<dbReference type="PROSITE" id="PS00922">
    <property type="entry name" value="TRANSGLYCOSYLASE"/>
    <property type="match status" value="1"/>
</dbReference>
<comment type="function">
    <text evidence="1">Murein-degrading enzyme. May play a role in recycling of muropeptides during cell elongation and/or cell division.</text>
</comment>
<comment type="catalytic activity">
    <reaction evidence="1">
        <text>Exolytic cleavage of the (1-&gt;4)-beta-glycosidic linkage between N-acetylmuramic acid (MurNAc) and N-acetylglucosamine (GlcNAc) residues in peptidoglycan, from either the reducing or the non-reducing ends of the peptidoglycan chains, with concomitant formation of a 1,6-anhydrobond in the MurNAc residue.</text>
        <dbReference type="EC" id="4.2.2.n1"/>
    </reaction>
</comment>
<comment type="subcellular location">
    <subcellularLocation>
        <location evidence="1">Cell outer membrane</location>
        <topology evidence="1">Lipid-anchor</topology>
    </subcellularLocation>
</comment>
<comment type="similarity">
    <text evidence="1">Belongs to the transglycosylase Slt family.</text>
</comment>
<comment type="sequence caution" evidence="2">
    <conflict type="erroneous initiation">
        <sequence resource="EMBL-CDS" id="ABG19479"/>
    </conflict>
</comment>
<comment type="sequence caution" evidence="2">
    <conflict type="erroneous initiation">
        <sequence resource="EMBL-CDS" id="EEO75648"/>
    </conflict>
</comment>
<name>MLTC_YERPN</name>
<protein>
    <recommendedName>
        <fullName evidence="1">Membrane-bound lytic murein transglycosylase C</fullName>
        <ecNumber evidence="1">4.2.2.n1</ecNumber>
    </recommendedName>
    <alternativeName>
        <fullName evidence="1">Murein lyase C</fullName>
    </alternativeName>
</protein>
<feature type="signal peptide" evidence="1">
    <location>
        <begin position="1"/>
        <end position="16"/>
    </location>
</feature>
<feature type="chain" id="PRO_0000323523" description="Membrane-bound lytic murein transglycosylase C">
    <location>
        <begin position="17"/>
        <end position="358"/>
    </location>
</feature>
<feature type="lipid moiety-binding region" description="N-palmitoyl cysteine" evidence="1">
    <location>
        <position position="17"/>
    </location>
</feature>
<feature type="lipid moiety-binding region" description="S-diacylglycerol cysteine" evidence="1">
    <location>
        <position position="17"/>
    </location>
</feature>